<gene>
    <name evidence="1" type="primary">secB</name>
    <name type="ordered locus">RD1_0441</name>
</gene>
<sequence>MAEEEEAKTEANGQQQAPQMRVLGQFIRDMSFENIMAQKGAPSDAQPDVQVQVNLDAKKRTADNQYESAIKLNVTSKVKDGDATLFVLELDYVGIFHVDNVPDEQLHPFLLIECPRMIFPFLRRIVSDITRDGGFPPLNLENIDFLSLYRNELARRQSSEAPKMDA</sequence>
<dbReference type="EMBL" id="CP000362">
    <property type="protein sequence ID" value="ABG30156.1"/>
    <property type="molecule type" value="Genomic_DNA"/>
</dbReference>
<dbReference type="RefSeq" id="WP_011566778.1">
    <property type="nucleotide sequence ID" value="NC_008209.1"/>
</dbReference>
<dbReference type="SMR" id="Q16CY7"/>
<dbReference type="STRING" id="375451.RD1_0441"/>
<dbReference type="KEGG" id="rde:RD1_0441"/>
<dbReference type="eggNOG" id="COG1952">
    <property type="taxonomic scope" value="Bacteria"/>
</dbReference>
<dbReference type="HOGENOM" id="CLU_111574_0_0_5"/>
<dbReference type="OrthoDB" id="9795145at2"/>
<dbReference type="Proteomes" id="UP000007029">
    <property type="component" value="Chromosome"/>
</dbReference>
<dbReference type="GO" id="GO:0005737">
    <property type="term" value="C:cytoplasm"/>
    <property type="evidence" value="ECO:0007669"/>
    <property type="project" value="UniProtKB-SubCell"/>
</dbReference>
<dbReference type="GO" id="GO:0051082">
    <property type="term" value="F:unfolded protein binding"/>
    <property type="evidence" value="ECO:0007669"/>
    <property type="project" value="InterPro"/>
</dbReference>
<dbReference type="GO" id="GO:0006457">
    <property type="term" value="P:protein folding"/>
    <property type="evidence" value="ECO:0007669"/>
    <property type="project" value="UniProtKB-UniRule"/>
</dbReference>
<dbReference type="GO" id="GO:0051262">
    <property type="term" value="P:protein tetramerization"/>
    <property type="evidence" value="ECO:0007669"/>
    <property type="project" value="InterPro"/>
</dbReference>
<dbReference type="GO" id="GO:0015031">
    <property type="term" value="P:protein transport"/>
    <property type="evidence" value="ECO:0007669"/>
    <property type="project" value="UniProtKB-UniRule"/>
</dbReference>
<dbReference type="Gene3D" id="3.10.420.10">
    <property type="entry name" value="SecB-like"/>
    <property type="match status" value="1"/>
</dbReference>
<dbReference type="HAMAP" id="MF_00821">
    <property type="entry name" value="SecB"/>
    <property type="match status" value="1"/>
</dbReference>
<dbReference type="InterPro" id="IPR003708">
    <property type="entry name" value="SecB"/>
</dbReference>
<dbReference type="InterPro" id="IPR035958">
    <property type="entry name" value="SecB-like_sf"/>
</dbReference>
<dbReference type="NCBIfam" id="NF004392">
    <property type="entry name" value="PRK05751.1-3"/>
    <property type="match status" value="1"/>
</dbReference>
<dbReference type="NCBIfam" id="TIGR00809">
    <property type="entry name" value="secB"/>
    <property type="match status" value="1"/>
</dbReference>
<dbReference type="PANTHER" id="PTHR36918">
    <property type="match status" value="1"/>
</dbReference>
<dbReference type="PANTHER" id="PTHR36918:SF1">
    <property type="entry name" value="PROTEIN-EXPORT PROTEIN SECB"/>
    <property type="match status" value="1"/>
</dbReference>
<dbReference type="Pfam" id="PF02556">
    <property type="entry name" value="SecB"/>
    <property type="match status" value="1"/>
</dbReference>
<dbReference type="PRINTS" id="PR01594">
    <property type="entry name" value="SECBCHAPRONE"/>
</dbReference>
<dbReference type="SUPFAM" id="SSF54611">
    <property type="entry name" value="SecB-like"/>
    <property type="match status" value="1"/>
</dbReference>
<protein>
    <recommendedName>
        <fullName evidence="1">Protein-export protein SecB</fullName>
    </recommendedName>
</protein>
<proteinExistence type="inferred from homology"/>
<reference key="1">
    <citation type="journal article" date="2007" name="J. Bacteriol.">
        <title>The complete genome sequence of Roseobacter denitrificans reveals a mixotrophic rather than photosynthetic metabolism.</title>
        <authorList>
            <person name="Swingley W.D."/>
            <person name="Sadekar S."/>
            <person name="Mastrian S.D."/>
            <person name="Matthies H.J."/>
            <person name="Hao J."/>
            <person name="Ramos H."/>
            <person name="Acharya C.R."/>
            <person name="Conrad A.L."/>
            <person name="Taylor H.L."/>
            <person name="Dejesa L.C."/>
            <person name="Shah M.K."/>
            <person name="O'Huallachain M.E."/>
            <person name="Lince M.T."/>
            <person name="Blankenship R.E."/>
            <person name="Beatty J.T."/>
            <person name="Touchman J.W."/>
        </authorList>
    </citation>
    <scope>NUCLEOTIDE SEQUENCE [LARGE SCALE GENOMIC DNA]</scope>
    <source>
        <strain>ATCC 33942 / OCh 114</strain>
    </source>
</reference>
<evidence type="ECO:0000255" key="1">
    <source>
        <dbReference type="HAMAP-Rule" id="MF_00821"/>
    </source>
</evidence>
<keyword id="KW-0143">Chaperone</keyword>
<keyword id="KW-0963">Cytoplasm</keyword>
<keyword id="KW-0653">Protein transport</keyword>
<keyword id="KW-1185">Reference proteome</keyword>
<keyword id="KW-0811">Translocation</keyword>
<keyword id="KW-0813">Transport</keyword>
<accession>Q16CY7</accession>
<name>SECB_ROSDO</name>
<comment type="function">
    <text evidence="1">One of the proteins required for the normal export of preproteins out of the cell cytoplasm. It is a molecular chaperone that binds to a subset of precursor proteins, maintaining them in a translocation-competent state. It also specifically binds to its receptor SecA.</text>
</comment>
<comment type="subunit">
    <text evidence="1">Homotetramer, a dimer of dimers. One homotetramer interacts with 1 SecA dimer.</text>
</comment>
<comment type="subcellular location">
    <subcellularLocation>
        <location evidence="1">Cytoplasm</location>
    </subcellularLocation>
</comment>
<comment type="similarity">
    <text evidence="1">Belongs to the SecB family.</text>
</comment>
<organism>
    <name type="scientific">Roseobacter denitrificans (strain ATCC 33942 / OCh 114)</name>
    <name type="common">Erythrobacter sp. (strain OCh 114)</name>
    <name type="synonym">Roseobacter denitrificans</name>
    <dbReference type="NCBI Taxonomy" id="375451"/>
    <lineage>
        <taxon>Bacteria</taxon>
        <taxon>Pseudomonadati</taxon>
        <taxon>Pseudomonadota</taxon>
        <taxon>Alphaproteobacteria</taxon>
        <taxon>Rhodobacterales</taxon>
        <taxon>Roseobacteraceae</taxon>
        <taxon>Roseobacter</taxon>
    </lineage>
</organism>
<feature type="chain" id="PRO_0000318263" description="Protein-export protein SecB">
    <location>
        <begin position="1"/>
        <end position="166"/>
    </location>
</feature>